<dbReference type="EC" id="6.1.1.20" evidence="1"/>
<dbReference type="EMBL" id="CP000542">
    <property type="protein sequence ID" value="ABM58826.1"/>
    <property type="molecule type" value="Genomic_DNA"/>
</dbReference>
<dbReference type="RefSeq" id="WP_011810821.1">
    <property type="nucleotide sequence ID" value="NC_008786.1"/>
</dbReference>
<dbReference type="SMR" id="A1WMG9"/>
<dbReference type="STRING" id="391735.Veis_3093"/>
<dbReference type="GeneID" id="76461555"/>
<dbReference type="KEGG" id="vei:Veis_3093"/>
<dbReference type="eggNOG" id="COG0016">
    <property type="taxonomic scope" value="Bacteria"/>
</dbReference>
<dbReference type="HOGENOM" id="CLU_025086_0_1_4"/>
<dbReference type="OrthoDB" id="9800719at2"/>
<dbReference type="Proteomes" id="UP000000374">
    <property type="component" value="Chromosome"/>
</dbReference>
<dbReference type="GO" id="GO:0005737">
    <property type="term" value="C:cytoplasm"/>
    <property type="evidence" value="ECO:0007669"/>
    <property type="project" value="UniProtKB-SubCell"/>
</dbReference>
<dbReference type="GO" id="GO:0005524">
    <property type="term" value="F:ATP binding"/>
    <property type="evidence" value="ECO:0007669"/>
    <property type="project" value="UniProtKB-UniRule"/>
</dbReference>
<dbReference type="GO" id="GO:0000287">
    <property type="term" value="F:magnesium ion binding"/>
    <property type="evidence" value="ECO:0007669"/>
    <property type="project" value="UniProtKB-UniRule"/>
</dbReference>
<dbReference type="GO" id="GO:0004826">
    <property type="term" value="F:phenylalanine-tRNA ligase activity"/>
    <property type="evidence" value="ECO:0007669"/>
    <property type="project" value="UniProtKB-UniRule"/>
</dbReference>
<dbReference type="GO" id="GO:0000049">
    <property type="term" value="F:tRNA binding"/>
    <property type="evidence" value="ECO:0007669"/>
    <property type="project" value="InterPro"/>
</dbReference>
<dbReference type="GO" id="GO:0006432">
    <property type="term" value="P:phenylalanyl-tRNA aminoacylation"/>
    <property type="evidence" value="ECO:0007669"/>
    <property type="project" value="UniProtKB-UniRule"/>
</dbReference>
<dbReference type="CDD" id="cd00496">
    <property type="entry name" value="PheRS_alpha_core"/>
    <property type="match status" value="1"/>
</dbReference>
<dbReference type="Gene3D" id="3.30.930.10">
    <property type="entry name" value="Bira Bifunctional Protein, Domain 2"/>
    <property type="match status" value="1"/>
</dbReference>
<dbReference type="HAMAP" id="MF_00281">
    <property type="entry name" value="Phe_tRNA_synth_alpha1"/>
    <property type="match status" value="1"/>
</dbReference>
<dbReference type="InterPro" id="IPR006195">
    <property type="entry name" value="aa-tRNA-synth_II"/>
</dbReference>
<dbReference type="InterPro" id="IPR045864">
    <property type="entry name" value="aa-tRNA-synth_II/BPL/LPL"/>
</dbReference>
<dbReference type="InterPro" id="IPR004529">
    <property type="entry name" value="Phe-tRNA-synth_IIc_asu"/>
</dbReference>
<dbReference type="InterPro" id="IPR004188">
    <property type="entry name" value="Phe-tRNA_ligase_II_N"/>
</dbReference>
<dbReference type="InterPro" id="IPR022911">
    <property type="entry name" value="Phe_tRNA_ligase_alpha1_bac"/>
</dbReference>
<dbReference type="InterPro" id="IPR002319">
    <property type="entry name" value="Phenylalanyl-tRNA_Synthase"/>
</dbReference>
<dbReference type="InterPro" id="IPR010978">
    <property type="entry name" value="tRNA-bd_arm"/>
</dbReference>
<dbReference type="NCBIfam" id="TIGR00468">
    <property type="entry name" value="pheS"/>
    <property type="match status" value="1"/>
</dbReference>
<dbReference type="PANTHER" id="PTHR11538:SF41">
    <property type="entry name" value="PHENYLALANINE--TRNA LIGASE, MITOCHONDRIAL"/>
    <property type="match status" value="1"/>
</dbReference>
<dbReference type="PANTHER" id="PTHR11538">
    <property type="entry name" value="PHENYLALANYL-TRNA SYNTHETASE"/>
    <property type="match status" value="1"/>
</dbReference>
<dbReference type="Pfam" id="PF02912">
    <property type="entry name" value="Phe_tRNA-synt_N"/>
    <property type="match status" value="1"/>
</dbReference>
<dbReference type="Pfam" id="PF01409">
    <property type="entry name" value="tRNA-synt_2d"/>
    <property type="match status" value="1"/>
</dbReference>
<dbReference type="SUPFAM" id="SSF55681">
    <property type="entry name" value="Class II aaRS and biotin synthetases"/>
    <property type="match status" value="1"/>
</dbReference>
<dbReference type="SUPFAM" id="SSF46589">
    <property type="entry name" value="tRNA-binding arm"/>
    <property type="match status" value="1"/>
</dbReference>
<dbReference type="PROSITE" id="PS50862">
    <property type="entry name" value="AA_TRNA_LIGASE_II"/>
    <property type="match status" value="1"/>
</dbReference>
<proteinExistence type="inferred from homology"/>
<name>SYFA_VEREI</name>
<keyword id="KW-0030">Aminoacyl-tRNA synthetase</keyword>
<keyword id="KW-0067">ATP-binding</keyword>
<keyword id="KW-0963">Cytoplasm</keyword>
<keyword id="KW-0436">Ligase</keyword>
<keyword id="KW-0460">Magnesium</keyword>
<keyword id="KW-0479">Metal-binding</keyword>
<keyword id="KW-0547">Nucleotide-binding</keyword>
<keyword id="KW-0648">Protein biosynthesis</keyword>
<keyword id="KW-1185">Reference proteome</keyword>
<reference key="1">
    <citation type="submission" date="2006-12" db="EMBL/GenBank/DDBJ databases">
        <title>Complete sequence of chromosome 1 of Verminephrobacter eiseniae EF01-2.</title>
        <authorList>
            <person name="Copeland A."/>
            <person name="Lucas S."/>
            <person name="Lapidus A."/>
            <person name="Barry K."/>
            <person name="Detter J.C."/>
            <person name="Glavina del Rio T."/>
            <person name="Dalin E."/>
            <person name="Tice H."/>
            <person name="Pitluck S."/>
            <person name="Chertkov O."/>
            <person name="Brettin T."/>
            <person name="Bruce D."/>
            <person name="Han C."/>
            <person name="Tapia R."/>
            <person name="Gilna P."/>
            <person name="Schmutz J."/>
            <person name="Larimer F."/>
            <person name="Land M."/>
            <person name="Hauser L."/>
            <person name="Kyrpides N."/>
            <person name="Kim E."/>
            <person name="Stahl D."/>
            <person name="Richardson P."/>
        </authorList>
    </citation>
    <scope>NUCLEOTIDE SEQUENCE [LARGE SCALE GENOMIC DNA]</scope>
    <source>
        <strain>EF01-2</strain>
    </source>
</reference>
<feature type="chain" id="PRO_1000059248" description="Phenylalanine--tRNA ligase alpha subunit">
    <location>
        <begin position="1"/>
        <end position="350"/>
    </location>
</feature>
<feature type="binding site" evidence="1">
    <location>
        <position position="271"/>
    </location>
    <ligand>
        <name>Mg(2+)</name>
        <dbReference type="ChEBI" id="CHEBI:18420"/>
        <note>shared with beta subunit</note>
    </ligand>
</feature>
<gene>
    <name evidence="1" type="primary">pheS</name>
    <name type="ordered locus">Veis_3093</name>
</gene>
<accession>A1WMG9</accession>
<comment type="catalytic activity">
    <reaction evidence="1">
        <text>tRNA(Phe) + L-phenylalanine + ATP = L-phenylalanyl-tRNA(Phe) + AMP + diphosphate + H(+)</text>
        <dbReference type="Rhea" id="RHEA:19413"/>
        <dbReference type="Rhea" id="RHEA-COMP:9668"/>
        <dbReference type="Rhea" id="RHEA-COMP:9699"/>
        <dbReference type="ChEBI" id="CHEBI:15378"/>
        <dbReference type="ChEBI" id="CHEBI:30616"/>
        <dbReference type="ChEBI" id="CHEBI:33019"/>
        <dbReference type="ChEBI" id="CHEBI:58095"/>
        <dbReference type="ChEBI" id="CHEBI:78442"/>
        <dbReference type="ChEBI" id="CHEBI:78531"/>
        <dbReference type="ChEBI" id="CHEBI:456215"/>
        <dbReference type="EC" id="6.1.1.20"/>
    </reaction>
</comment>
<comment type="cofactor">
    <cofactor evidence="1">
        <name>Mg(2+)</name>
        <dbReference type="ChEBI" id="CHEBI:18420"/>
    </cofactor>
    <text evidence="1">Binds 2 magnesium ions per tetramer.</text>
</comment>
<comment type="subunit">
    <text evidence="1">Tetramer of two alpha and two beta subunits.</text>
</comment>
<comment type="subcellular location">
    <subcellularLocation>
        <location evidence="1">Cytoplasm</location>
    </subcellularLocation>
</comment>
<comment type="similarity">
    <text evidence="1">Belongs to the class-II aminoacyl-tRNA synthetase family. Phe-tRNA synthetase alpha subunit type 1 subfamily.</text>
</comment>
<protein>
    <recommendedName>
        <fullName evidence="1">Phenylalanine--tRNA ligase alpha subunit</fullName>
        <ecNumber evidence="1">6.1.1.20</ecNumber>
    </recommendedName>
    <alternativeName>
        <fullName evidence="1">Phenylalanyl-tRNA synthetase alpha subunit</fullName>
        <shortName evidence="1">PheRS</shortName>
    </alternativeName>
</protein>
<organism>
    <name type="scientific">Verminephrobacter eiseniae (strain EF01-2)</name>
    <dbReference type="NCBI Taxonomy" id="391735"/>
    <lineage>
        <taxon>Bacteria</taxon>
        <taxon>Pseudomonadati</taxon>
        <taxon>Pseudomonadota</taxon>
        <taxon>Betaproteobacteria</taxon>
        <taxon>Burkholderiales</taxon>
        <taxon>Comamonadaceae</taxon>
        <taxon>Verminephrobacter</taxon>
    </lineage>
</organism>
<evidence type="ECO:0000255" key="1">
    <source>
        <dbReference type="HAMAP-Rule" id="MF_00281"/>
    </source>
</evidence>
<sequence>MNELDSLVESARQRFAQSTSPADLENAKAQFLGKSGRVTELMKGMAQLCVAEKKTRGAAINLAKQAIEAALNARRQALADAQLQQQLTADALDVSLPGRQRGQGGLHPVSLTLERIEGLFGSMGFDVADGPEIETDWFNFTALNTPEDHPARSMHDTFYVEGGTAGAPNLLRTHTSPMQIRHAVQHVKAHRAALDAGQPMPEIRVIAPGRAYRIDSDATHSPMFHQCEGLWIGENVGFKDLKVIFTGFCRRFFESDDLVLRFRPSFFPFTEPSAEIDIRFQTGPLAGRWLEVAGSGQVHPNVVRNMGLDPEKYIGFAFGMGLDRLTMLRYGVSDLRLFFDGDIRFLSQFR</sequence>